<comment type="function">
    <text evidence="1">Catalyzes the reversible interconversion of serine and glycine with tetrahydrofolate (THF) serving as the one-carbon carrier. This reaction serves as the major source of one-carbon groups required for the biosynthesis of purines, thymidylate, methionine, and other important biomolecules. Also exhibits THF-independent aldolase activity toward beta-hydroxyamino acids, producing glycine and aldehydes, via a retro-aldol mechanism.</text>
</comment>
<comment type="catalytic activity">
    <reaction evidence="1">
        <text>(6R)-5,10-methylene-5,6,7,8-tetrahydrofolate + glycine + H2O = (6S)-5,6,7,8-tetrahydrofolate + L-serine</text>
        <dbReference type="Rhea" id="RHEA:15481"/>
        <dbReference type="ChEBI" id="CHEBI:15377"/>
        <dbReference type="ChEBI" id="CHEBI:15636"/>
        <dbReference type="ChEBI" id="CHEBI:33384"/>
        <dbReference type="ChEBI" id="CHEBI:57305"/>
        <dbReference type="ChEBI" id="CHEBI:57453"/>
        <dbReference type="EC" id="2.1.2.1"/>
    </reaction>
</comment>
<comment type="cofactor">
    <cofactor evidence="1">
        <name>pyridoxal 5'-phosphate</name>
        <dbReference type="ChEBI" id="CHEBI:597326"/>
    </cofactor>
</comment>
<comment type="pathway">
    <text evidence="1">One-carbon metabolism; tetrahydrofolate interconversion.</text>
</comment>
<comment type="pathway">
    <text evidence="1">Amino-acid biosynthesis; glycine biosynthesis; glycine from L-serine: step 1/1.</text>
</comment>
<comment type="subunit">
    <text evidence="1">Homodimer.</text>
</comment>
<comment type="subcellular location">
    <subcellularLocation>
        <location evidence="1">Cytoplasm</location>
    </subcellularLocation>
</comment>
<comment type="similarity">
    <text evidence="1">Belongs to the SHMT family.</text>
</comment>
<accession>B3PBD6</accession>
<feature type="chain" id="PRO_1000091524" description="Serine hydroxymethyltransferase">
    <location>
        <begin position="1"/>
        <end position="421"/>
    </location>
</feature>
<feature type="binding site" evidence="1">
    <location>
        <position position="121"/>
    </location>
    <ligand>
        <name>(6S)-5,6,7,8-tetrahydrofolate</name>
        <dbReference type="ChEBI" id="CHEBI:57453"/>
    </ligand>
</feature>
<feature type="binding site" evidence="1">
    <location>
        <begin position="125"/>
        <end position="127"/>
    </location>
    <ligand>
        <name>(6S)-5,6,7,8-tetrahydrofolate</name>
        <dbReference type="ChEBI" id="CHEBI:57453"/>
    </ligand>
</feature>
<feature type="binding site" evidence="1">
    <location>
        <begin position="355"/>
        <end position="357"/>
    </location>
    <ligand>
        <name>(6S)-5,6,7,8-tetrahydrofolate</name>
        <dbReference type="ChEBI" id="CHEBI:57453"/>
    </ligand>
</feature>
<feature type="site" description="Plays an important role in substrate specificity" evidence="1">
    <location>
        <position position="229"/>
    </location>
</feature>
<feature type="modified residue" description="N6-(pyridoxal phosphate)lysine" evidence="1">
    <location>
        <position position="230"/>
    </location>
</feature>
<evidence type="ECO:0000255" key="1">
    <source>
        <dbReference type="HAMAP-Rule" id="MF_00051"/>
    </source>
</evidence>
<organism>
    <name type="scientific">Cellvibrio japonicus (strain Ueda107)</name>
    <name type="common">Pseudomonas fluorescens subsp. cellulosa</name>
    <dbReference type="NCBI Taxonomy" id="498211"/>
    <lineage>
        <taxon>Bacteria</taxon>
        <taxon>Pseudomonadati</taxon>
        <taxon>Pseudomonadota</taxon>
        <taxon>Gammaproteobacteria</taxon>
        <taxon>Cellvibrionales</taxon>
        <taxon>Cellvibrionaceae</taxon>
        <taxon>Cellvibrio</taxon>
    </lineage>
</organism>
<protein>
    <recommendedName>
        <fullName evidence="1">Serine hydroxymethyltransferase</fullName>
        <shortName evidence="1">SHMT</shortName>
        <shortName evidence="1">Serine methylase</shortName>
        <ecNumber evidence="1">2.1.2.1</ecNumber>
    </recommendedName>
</protein>
<sequence length="421" mass="45531">MFDKTQTIAAFDPEIWASIQNEGRRQEEHIELIASENYTSPLVMAAQGTKLTNKYAEGYPGKRYYGGCEYVDQSEALAIERAKQLFGADYANVQPHSGSQANTAVYAALCAPGDTVLGMSLAHGGHLTHGAKVNFSGKIYNAVQYGLNPETGLVDYDEVERLALEHKPKMIVAGFSAYSQVLDWQRFRDIADKVGAYLMVDMAHVAGLVAAGLYPNPVQIADVTTSTTHKTLRGPRGGIILAKANEEIEKKLNSAVFPGGQGGPLMHVIAAKAISFKEAMTPEYKDYQQQVVKNAKAMAATFIERGIKIVSGGTENHLMLVDLIGKPYSGKDADEALGKAHITVNKNAVPNDPRSPFVTSGIRVGTPAITTRGFKEAECIQLTNWICDIFAALEAGNADAVIEQVKTRVASLCKEFPVYAD</sequence>
<gene>
    <name evidence="1" type="primary">glyA</name>
    <name type="ordered locus">CJA_2703</name>
</gene>
<proteinExistence type="inferred from homology"/>
<keyword id="KW-0028">Amino-acid biosynthesis</keyword>
<keyword id="KW-0963">Cytoplasm</keyword>
<keyword id="KW-0554">One-carbon metabolism</keyword>
<keyword id="KW-0663">Pyridoxal phosphate</keyword>
<keyword id="KW-1185">Reference proteome</keyword>
<keyword id="KW-0808">Transferase</keyword>
<name>GLYA_CELJU</name>
<reference key="1">
    <citation type="journal article" date="2008" name="J. Bacteriol.">
        <title>Insights into plant cell wall degradation from the genome sequence of the soil bacterium Cellvibrio japonicus.</title>
        <authorList>
            <person name="DeBoy R.T."/>
            <person name="Mongodin E.F."/>
            <person name="Fouts D.E."/>
            <person name="Tailford L.E."/>
            <person name="Khouri H."/>
            <person name="Emerson J.B."/>
            <person name="Mohamoud Y."/>
            <person name="Watkins K."/>
            <person name="Henrissat B."/>
            <person name="Gilbert H.J."/>
            <person name="Nelson K.E."/>
        </authorList>
    </citation>
    <scope>NUCLEOTIDE SEQUENCE [LARGE SCALE GENOMIC DNA]</scope>
    <source>
        <strain>Ueda107</strain>
    </source>
</reference>
<dbReference type="EC" id="2.1.2.1" evidence="1"/>
<dbReference type="EMBL" id="CP000934">
    <property type="protein sequence ID" value="ACE84574.1"/>
    <property type="molecule type" value="Genomic_DNA"/>
</dbReference>
<dbReference type="RefSeq" id="WP_012488297.1">
    <property type="nucleotide sequence ID" value="NC_010995.1"/>
</dbReference>
<dbReference type="SMR" id="B3PBD6"/>
<dbReference type="STRING" id="498211.CJA_2703"/>
<dbReference type="KEGG" id="cja:CJA_2703"/>
<dbReference type="eggNOG" id="COG0112">
    <property type="taxonomic scope" value="Bacteria"/>
</dbReference>
<dbReference type="HOGENOM" id="CLU_022477_2_1_6"/>
<dbReference type="OrthoDB" id="9803846at2"/>
<dbReference type="UniPathway" id="UPA00193"/>
<dbReference type="UniPathway" id="UPA00288">
    <property type="reaction ID" value="UER01023"/>
</dbReference>
<dbReference type="Proteomes" id="UP000001036">
    <property type="component" value="Chromosome"/>
</dbReference>
<dbReference type="GO" id="GO:0005829">
    <property type="term" value="C:cytosol"/>
    <property type="evidence" value="ECO:0007669"/>
    <property type="project" value="TreeGrafter"/>
</dbReference>
<dbReference type="GO" id="GO:0004372">
    <property type="term" value="F:glycine hydroxymethyltransferase activity"/>
    <property type="evidence" value="ECO:0007669"/>
    <property type="project" value="UniProtKB-UniRule"/>
</dbReference>
<dbReference type="GO" id="GO:0030170">
    <property type="term" value="F:pyridoxal phosphate binding"/>
    <property type="evidence" value="ECO:0007669"/>
    <property type="project" value="UniProtKB-UniRule"/>
</dbReference>
<dbReference type="GO" id="GO:0019264">
    <property type="term" value="P:glycine biosynthetic process from serine"/>
    <property type="evidence" value="ECO:0007669"/>
    <property type="project" value="UniProtKB-UniRule"/>
</dbReference>
<dbReference type="GO" id="GO:0035999">
    <property type="term" value="P:tetrahydrofolate interconversion"/>
    <property type="evidence" value="ECO:0007669"/>
    <property type="project" value="UniProtKB-UniRule"/>
</dbReference>
<dbReference type="CDD" id="cd00378">
    <property type="entry name" value="SHMT"/>
    <property type="match status" value="1"/>
</dbReference>
<dbReference type="FunFam" id="3.40.640.10:FF:000001">
    <property type="entry name" value="Serine hydroxymethyltransferase"/>
    <property type="match status" value="1"/>
</dbReference>
<dbReference type="FunFam" id="3.90.1150.10:FF:000003">
    <property type="entry name" value="Serine hydroxymethyltransferase"/>
    <property type="match status" value="1"/>
</dbReference>
<dbReference type="Gene3D" id="3.90.1150.10">
    <property type="entry name" value="Aspartate Aminotransferase, domain 1"/>
    <property type="match status" value="1"/>
</dbReference>
<dbReference type="Gene3D" id="3.40.640.10">
    <property type="entry name" value="Type I PLP-dependent aspartate aminotransferase-like (Major domain)"/>
    <property type="match status" value="1"/>
</dbReference>
<dbReference type="HAMAP" id="MF_00051">
    <property type="entry name" value="SHMT"/>
    <property type="match status" value="1"/>
</dbReference>
<dbReference type="InterPro" id="IPR015424">
    <property type="entry name" value="PyrdxlP-dep_Trfase"/>
</dbReference>
<dbReference type="InterPro" id="IPR015421">
    <property type="entry name" value="PyrdxlP-dep_Trfase_major"/>
</dbReference>
<dbReference type="InterPro" id="IPR015422">
    <property type="entry name" value="PyrdxlP-dep_Trfase_small"/>
</dbReference>
<dbReference type="InterPro" id="IPR001085">
    <property type="entry name" value="Ser_HO-MeTrfase"/>
</dbReference>
<dbReference type="InterPro" id="IPR049943">
    <property type="entry name" value="Ser_HO-MeTrfase-like"/>
</dbReference>
<dbReference type="InterPro" id="IPR019798">
    <property type="entry name" value="Ser_HO-MeTrfase_PLP_BS"/>
</dbReference>
<dbReference type="InterPro" id="IPR039429">
    <property type="entry name" value="SHMT-like_dom"/>
</dbReference>
<dbReference type="NCBIfam" id="NF000586">
    <property type="entry name" value="PRK00011.1"/>
    <property type="match status" value="1"/>
</dbReference>
<dbReference type="PANTHER" id="PTHR11680">
    <property type="entry name" value="SERINE HYDROXYMETHYLTRANSFERASE"/>
    <property type="match status" value="1"/>
</dbReference>
<dbReference type="PANTHER" id="PTHR11680:SF50">
    <property type="entry name" value="SERINE HYDROXYMETHYLTRANSFERASE"/>
    <property type="match status" value="1"/>
</dbReference>
<dbReference type="Pfam" id="PF00464">
    <property type="entry name" value="SHMT"/>
    <property type="match status" value="1"/>
</dbReference>
<dbReference type="PIRSF" id="PIRSF000412">
    <property type="entry name" value="SHMT"/>
    <property type="match status" value="1"/>
</dbReference>
<dbReference type="SUPFAM" id="SSF53383">
    <property type="entry name" value="PLP-dependent transferases"/>
    <property type="match status" value="1"/>
</dbReference>
<dbReference type="PROSITE" id="PS00096">
    <property type="entry name" value="SHMT"/>
    <property type="match status" value="1"/>
</dbReference>